<name>YE077_YEAST</name>
<organism>
    <name type="scientific">Saccharomyces cerevisiae (strain ATCC 204508 / S288c)</name>
    <name type="common">Baker's yeast</name>
    <dbReference type="NCBI Taxonomy" id="559292"/>
    <lineage>
        <taxon>Eukaryota</taxon>
        <taxon>Fungi</taxon>
        <taxon>Dikarya</taxon>
        <taxon>Ascomycota</taxon>
        <taxon>Saccharomycotina</taxon>
        <taxon>Saccharomycetes</taxon>
        <taxon>Saccharomycetales</taxon>
        <taxon>Saccharomycetaceae</taxon>
        <taxon>Saccharomyces</taxon>
    </lineage>
</organism>
<dbReference type="EC" id="5.6.2.-" evidence="5"/>
<dbReference type="EMBL" id="U73806">
    <property type="status" value="NOT_ANNOTATED_CDS"/>
    <property type="molecule type" value="Genomic_DNA"/>
</dbReference>
<dbReference type="EMBL" id="BK006939">
    <property type="protein sequence ID" value="DAA07578.1"/>
    <property type="molecule type" value="Genomic_DNA"/>
</dbReference>
<dbReference type="RefSeq" id="NP_010835.1">
    <property type="nucleotide sequence ID" value="NM_001184302.1"/>
</dbReference>
<dbReference type="BioGRID" id="36654">
    <property type="interactions" value="24"/>
</dbReference>
<dbReference type="DIP" id="DIP-48278N"/>
<dbReference type="FunCoup" id="Q3E7X8">
    <property type="interactions" value="63"/>
</dbReference>
<dbReference type="STRING" id="4932.YEL077C"/>
<dbReference type="CarbonylDB" id="Q3E7X8"/>
<dbReference type="PaxDb" id="4932-YEL077C"/>
<dbReference type="PeptideAtlas" id="Q3E7X8"/>
<dbReference type="EnsemblFungi" id="YEL077C_mRNA">
    <property type="protein sequence ID" value="YEL077C"/>
    <property type="gene ID" value="YEL077C"/>
</dbReference>
<dbReference type="GeneID" id="856630"/>
<dbReference type="KEGG" id="sce:YEL077C"/>
<dbReference type="AGR" id="SGD:S000006409"/>
<dbReference type="SGD" id="S000006409">
    <property type="gene designation" value="YEL077C"/>
</dbReference>
<dbReference type="VEuPathDB" id="FungiDB:YEL077C"/>
<dbReference type="eggNOG" id="ENOG502QWCT">
    <property type="taxonomic scope" value="Eukaryota"/>
</dbReference>
<dbReference type="GeneTree" id="ENSGT00940000153173"/>
<dbReference type="HOGENOM" id="CLU_011178_2_0_1"/>
<dbReference type="InParanoid" id="Q3E7X8"/>
<dbReference type="OrthoDB" id="4050369at2759"/>
<dbReference type="BioCyc" id="YEAST:G3O-30356-MONOMER"/>
<dbReference type="Reactome" id="R-SCE-5689880">
    <property type="pathway name" value="Ub-specific processing proteases"/>
</dbReference>
<dbReference type="BioGRID-ORCS" id="856630">
    <property type="hits" value="2 hits in 10 CRISPR screens"/>
</dbReference>
<dbReference type="PRO" id="PR:Q3E7X8"/>
<dbReference type="Proteomes" id="UP000002311">
    <property type="component" value="Chromosome V"/>
</dbReference>
<dbReference type="RNAct" id="Q3E7X8">
    <property type="molecule type" value="protein"/>
</dbReference>
<dbReference type="GO" id="GO:0005737">
    <property type="term" value="C:cytoplasm"/>
    <property type="evidence" value="ECO:0000318"/>
    <property type="project" value="GO_Central"/>
</dbReference>
<dbReference type="GO" id="GO:0005524">
    <property type="term" value="F:ATP binding"/>
    <property type="evidence" value="ECO:0007669"/>
    <property type="project" value="UniProtKB-KW"/>
</dbReference>
<dbReference type="GO" id="GO:0016887">
    <property type="term" value="F:ATP hydrolysis activity"/>
    <property type="evidence" value="ECO:0007669"/>
    <property type="project" value="RHEA"/>
</dbReference>
<dbReference type="GO" id="GO:0004386">
    <property type="term" value="F:helicase activity"/>
    <property type="evidence" value="ECO:0000250"/>
    <property type="project" value="SGD"/>
</dbReference>
<dbReference type="GO" id="GO:0003676">
    <property type="term" value="F:nucleic acid binding"/>
    <property type="evidence" value="ECO:0007669"/>
    <property type="project" value="InterPro"/>
</dbReference>
<dbReference type="FunFam" id="3.40.50.300:FF:001914">
    <property type="entry name" value="YML133C-like protein"/>
    <property type="match status" value="1"/>
</dbReference>
<dbReference type="FunFam" id="3.40.50.300:FF:002410">
    <property type="entry name" value="YML133C-like protein"/>
    <property type="match status" value="1"/>
</dbReference>
<dbReference type="Gene3D" id="3.40.50.300">
    <property type="entry name" value="P-loop containing nucleotide triphosphate hydrolases"/>
    <property type="match status" value="1"/>
</dbReference>
<dbReference type="InterPro" id="IPR011545">
    <property type="entry name" value="DEAD/DEAH_box_helicase_dom"/>
</dbReference>
<dbReference type="InterPro" id="IPR014001">
    <property type="entry name" value="Helicase_ATP-bd"/>
</dbReference>
<dbReference type="InterPro" id="IPR001650">
    <property type="entry name" value="Helicase_C-like"/>
</dbReference>
<dbReference type="InterPro" id="IPR027417">
    <property type="entry name" value="P-loop_NTPase"/>
</dbReference>
<dbReference type="InterPro" id="IPR051363">
    <property type="entry name" value="RLR_Helicase"/>
</dbReference>
<dbReference type="PANTHER" id="PTHR14074:SF39">
    <property type="entry name" value="FANCONI ANEMIA GROUP M PROTEIN"/>
    <property type="match status" value="1"/>
</dbReference>
<dbReference type="PANTHER" id="PTHR14074">
    <property type="entry name" value="HELICASE WITH DEATH DOMAIN-RELATED"/>
    <property type="match status" value="1"/>
</dbReference>
<dbReference type="Pfam" id="PF00270">
    <property type="entry name" value="DEAD"/>
    <property type="match status" value="1"/>
</dbReference>
<dbReference type="Pfam" id="PF00271">
    <property type="entry name" value="Helicase_C"/>
    <property type="match status" value="1"/>
</dbReference>
<dbReference type="SMART" id="SM00487">
    <property type="entry name" value="DEXDc"/>
    <property type="match status" value="1"/>
</dbReference>
<dbReference type="SMART" id="SM00490">
    <property type="entry name" value="HELICc"/>
    <property type="match status" value="1"/>
</dbReference>
<dbReference type="SUPFAM" id="SSF52540">
    <property type="entry name" value="P-loop containing nucleoside triphosphate hydrolases"/>
    <property type="match status" value="1"/>
</dbReference>
<dbReference type="PROSITE" id="PS51192">
    <property type="entry name" value="HELICASE_ATP_BIND_1"/>
    <property type="match status" value="1"/>
</dbReference>
<dbReference type="PROSITE" id="PS51194">
    <property type="entry name" value="HELICASE_CTER"/>
    <property type="match status" value="1"/>
</dbReference>
<feature type="chain" id="PRO_0000268166" description="Y' element ATP-dependent helicase YEL077C">
    <location>
        <begin position="1"/>
        <end position="1277"/>
    </location>
</feature>
<feature type="domain" description="Helicase ATP-binding" evidence="1">
    <location>
        <begin position="222"/>
        <end position="399"/>
    </location>
</feature>
<feature type="domain" description="Helicase C-terminal" evidence="2">
    <location>
        <begin position="454"/>
        <end position="605"/>
    </location>
</feature>
<feature type="region of interest" description="Disordered" evidence="3">
    <location>
        <begin position="696"/>
        <end position="763"/>
    </location>
</feature>
<feature type="region of interest" description="Disordered" evidence="3">
    <location>
        <begin position="775"/>
        <end position="895"/>
    </location>
</feature>
<feature type="short sequence motif" description="DEAH box">
    <location>
        <begin position="345"/>
        <end position="348"/>
    </location>
</feature>
<feature type="compositionally biased region" description="Low complexity" evidence="3">
    <location>
        <begin position="775"/>
        <end position="878"/>
    </location>
</feature>
<feature type="compositionally biased region" description="Basic and acidic residues" evidence="3">
    <location>
        <begin position="879"/>
        <end position="895"/>
    </location>
</feature>
<feature type="binding site" evidence="1">
    <location>
        <begin position="235"/>
        <end position="242"/>
    </location>
    <ligand>
        <name>ATP</name>
        <dbReference type="ChEBI" id="CHEBI:30616"/>
    </ligand>
</feature>
<reference key="1">
    <citation type="journal article" date="1997" name="Nature">
        <title>The nucleotide sequence of Saccharomyces cerevisiae chromosome V.</title>
        <authorList>
            <person name="Dietrich F.S."/>
            <person name="Mulligan J.T."/>
            <person name="Hennessy K.M."/>
            <person name="Yelton M.A."/>
            <person name="Allen E."/>
            <person name="Araujo R."/>
            <person name="Aviles E."/>
            <person name="Berno A."/>
            <person name="Brennan T."/>
            <person name="Carpenter J."/>
            <person name="Chen E."/>
            <person name="Cherry J.M."/>
            <person name="Chung E."/>
            <person name="Duncan M."/>
            <person name="Guzman E."/>
            <person name="Hartzell G."/>
            <person name="Hunicke-Smith S."/>
            <person name="Hyman R.W."/>
            <person name="Kayser A."/>
            <person name="Komp C."/>
            <person name="Lashkari D."/>
            <person name="Lew H."/>
            <person name="Lin D."/>
            <person name="Mosedale D."/>
            <person name="Nakahara K."/>
            <person name="Namath A."/>
            <person name="Norgren R."/>
            <person name="Oefner P."/>
            <person name="Oh C."/>
            <person name="Petel F.X."/>
            <person name="Roberts D."/>
            <person name="Sehl P."/>
            <person name="Schramm S."/>
            <person name="Shogren T."/>
            <person name="Smith V."/>
            <person name="Taylor P."/>
            <person name="Wei Y."/>
            <person name="Botstein D."/>
            <person name="Davis R.W."/>
        </authorList>
    </citation>
    <scope>NUCLEOTIDE SEQUENCE [LARGE SCALE GENOMIC DNA]</scope>
    <source>
        <strain>ATCC 204508 / S288c</strain>
    </source>
</reference>
<reference key="2">
    <citation type="journal article" date="2014" name="G3 (Bethesda)">
        <title>The reference genome sequence of Saccharomyces cerevisiae: Then and now.</title>
        <authorList>
            <person name="Engel S.R."/>
            <person name="Dietrich F.S."/>
            <person name="Fisk D.G."/>
            <person name="Binkley G."/>
            <person name="Balakrishnan R."/>
            <person name="Costanzo M.C."/>
            <person name="Dwight S.S."/>
            <person name="Hitz B.C."/>
            <person name="Karra K."/>
            <person name="Nash R.S."/>
            <person name="Weng S."/>
            <person name="Wong E.D."/>
            <person name="Lloyd P."/>
            <person name="Skrzypek M.S."/>
            <person name="Miyasato S.R."/>
            <person name="Simison M."/>
            <person name="Cherry J.M."/>
        </authorList>
    </citation>
    <scope>GENOME REANNOTATION</scope>
    <source>
        <strain>ATCC 204508 / S288c</strain>
    </source>
</reference>
<reference key="3">
    <citation type="journal article" date="1998" name="J. Biol. Chem.">
        <title>Y'-Help1, a DNA helicase encoded by the yeast subtelomeric Y' element, is induced in survivors defective for telomerase.</title>
        <authorList>
            <person name="Yamada M."/>
            <person name="Hayatsu N."/>
            <person name="Matsuura A."/>
            <person name="Ishikawa F."/>
        </authorList>
    </citation>
    <scope>FUNCTION</scope>
    <scope>INDUCTION</scope>
</reference>
<comment type="function">
    <text evidence="5">Catalyzes DNA unwinding and is involved in telomerase-independent telomere maintenance.</text>
</comment>
<comment type="induction">
    <text evidence="5">Induced in absence of telomerase TLC1.</text>
</comment>
<comment type="similarity">
    <text evidence="4">Belongs to the helicase family. Yeast subtelomeric Y' repeat subfamily.</text>
</comment>
<proteinExistence type="evidence at transcript level"/>
<sequence>MTLGNSYDAFNHDPWMDVVGFEDPNQVTNRDISRIVLYSYMFLNTAKGCLVEYATFRQYMRELPKNAPQKLNFREMRQGLIALGRHCVGSRFETDLYESATSELMANHSVQTGRNIYGVDSFSLTSVSGTTATLLQERASERWIQWLGLESDYHCSFSSTRNAEDVVAGEAASSDHHQKISRVTRKRPREPKSTNDILVAGQKLFGSSFEFRDLHQLRLCYEIYMADTPSVAVQAPPGYGKTELFHLPLIALASKGDVKYVSFLFVPYTVLLANCMIRLGRCGCLNVAPVRNFIEEGYDGVTDLYVGIYDDLASTNFTDRIAAWENIVECTFRTNNVKLGYLIVDEFHNFETEVYRQSQFGGITNLDFDAFEKAIFLSGTAPEAVADAALQRIGLTGLAKKSMDINELKRSEDLSRGLSSYPTRMFNLIKEKSEVPLGHVHKIRKKVESQPEEALKLLLALFESEPESKAIVVASTTNEVEELACSWRKYFRVVWIHGKLDAAEKVSRTKEFVTDGNMRVLIGTKLVTEGIDIKQLMMVIMLDNRLNIIELIQGVGRLRDGGLCYLLSRKNSWAARNRKGELPPIKEGCITEQVREFYGLESKKGKKGQHVGCCGSRTDLSADTVELIERMDRLAEKQATASMSIVALPSNFQESNSSDRYRKYCSSDEDSNTCIHGSANASTNASTNAITTASTNVRTNATTNASTNATTNASTNATTNSSTNATTTASTNVRTSATTTASINVRTSATTTESTNSSTNATTTASINVRTSATTTKSINSSTNATITESTNSNTNATTTESTNSKTSATTTASTNSNTSATTTESTNSKTSATTTASTNSNTSATTTESTNSNTSATTTASTNSSTNATTTESTNASAKEDANKDGNAEDNRFHPVTDINKESYKRKGSQMVLLERKKLKAQFPNTSENMNVLQFLGFRSDEIKHLFLYGIDIYFCPEGVFTQYGLCKGCQKMFELCVCWAGQKVSYRRMAWEALAVERMLRNDEEYKEYLEDIEPYHGDPVGYLKYFSVKRREIYSQIQRNYAWYLAITRRRETISVLDSTRGKQGSQVFRMSGRQIKELYYKVWSNLRESKTEVLQYFLNWDEKKCQEEWEAKDDTVFVEALEKVGVFQRLRSMTSAGLQGPQYVKLQFSRHHRQLRSRYELSLGMHLRDQIALGVTPSKVPHWTAFLSMLIGLFYNKTFRQKLEYLLEQISEVWLLPHWLDLANVEVLAADNTKVPLYMLMVAVHKELDSDDVPDGRFDIILLCRDSSREVGE</sequence>
<accession>Q3E7X8</accession>
<accession>D3DLH4</accession>
<gene>
    <name type="ordered locus">YEL077C</name>
</gene>
<evidence type="ECO:0000255" key="1">
    <source>
        <dbReference type="PROSITE-ProRule" id="PRU00541"/>
    </source>
</evidence>
<evidence type="ECO:0000255" key="2">
    <source>
        <dbReference type="PROSITE-ProRule" id="PRU00542"/>
    </source>
</evidence>
<evidence type="ECO:0000256" key="3">
    <source>
        <dbReference type="SAM" id="MobiDB-lite"/>
    </source>
</evidence>
<evidence type="ECO:0000305" key="4"/>
<evidence type="ECO:0000305" key="5">
    <source>
    </source>
</evidence>
<keyword id="KW-0067">ATP-binding</keyword>
<keyword id="KW-0347">Helicase</keyword>
<keyword id="KW-0378">Hydrolase</keyword>
<keyword id="KW-0413">Isomerase</keyword>
<keyword id="KW-0547">Nucleotide-binding</keyword>
<keyword id="KW-1185">Reference proteome</keyword>
<protein>
    <recommendedName>
        <fullName>Y' element ATP-dependent helicase YEL077C</fullName>
        <ecNumber evidence="5">5.6.2.-</ecNumber>
    </recommendedName>
</protein>